<sequence length="499" mass="55495">MINKKISLGVLSILTAFSLQSVSYACTGFIIGKDLTKDGSLLYGRTEDLEPHHNKNFIVRLAKDNPAGEKWKDLSNGFEYPLPEHSYRYSAIPDVTPNKGVYDEAGFNECGVSMSATVSASANDAIQKIDPYVKNGLAESSMASVILPSVKTAREGVALIAKIVTEKGAAEGNIVTLADKDGIWYMEILSGHQYVAIKFPDDKYAVFPNTFYLGHVDFNDKENTIASEDVEKVAKKAKSYIEVDGKFHIAKSYNPPLNDANRSRSFSGIKSLDPDSKVTYKDSNYELLQSTDKTFSLEDAMKLQRNRFEGLDLKPLDQMALDGKGKPKSKKAVKGYAYPISNPNVMEAHIFQLKKDIPAELGGGVMWLSIGSPRNAPYLPYLGNISRTYEAYQEKSTQYNDKSWYWTVSHINDLVAAHPKPFGTKVIDEMKGLEKTWIAEQDKSTKEISDLVVSDPKAAQEKADKISLDRAEKTFKRLKAIEAKLVEEKPKNKKGLNRS</sequence>
<accession>Q8NZ57</accession>
<evidence type="ECO:0000255" key="1"/>
<evidence type="ECO:0000305" key="2"/>
<gene>
    <name type="primary">pepDB</name>
    <name type="ordered locus">spyM18_2126</name>
</gene>
<name>PEPDB_STRP8</name>
<dbReference type="EC" id="3.4.13.19"/>
<dbReference type="EMBL" id="AE009949">
    <property type="protein sequence ID" value="AAL98580.1"/>
    <property type="molecule type" value="Genomic_DNA"/>
</dbReference>
<dbReference type="RefSeq" id="WP_011018292.1">
    <property type="nucleotide sequence ID" value="NC_003485.1"/>
</dbReference>
<dbReference type="SMR" id="Q8NZ57"/>
<dbReference type="MEROPS" id="C69.002"/>
<dbReference type="KEGG" id="spm:spyM18_2126"/>
<dbReference type="HOGENOM" id="CLU_014823_0_1_9"/>
<dbReference type="GO" id="GO:0070004">
    <property type="term" value="F:cysteine-type exopeptidase activity"/>
    <property type="evidence" value="ECO:0007669"/>
    <property type="project" value="InterPro"/>
</dbReference>
<dbReference type="GO" id="GO:0016805">
    <property type="term" value="F:dipeptidase activity"/>
    <property type="evidence" value="ECO:0007669"/>
    <property type="project" value="UniProtKB-KW"/>
</dbReference>
<dbReference type="GO" id="GO:0006508">
    <property type="term" value="P:proteolysis"/>
    <property type="evidence" value="ECO:0007669"/>
    <property type="project" value="UniProtKB-KW"/>
</dbReference>
<dbReference type="Gene3D" id="3.60.60.10">
    <property type="entry name" value="Penicillin V Acylase, Chain A"/>
    <property type="match status" value="1"/>
</dbReference>
<dbReference type="InterPro" id="IPR047804">
    <property type="entry name" value="C69_dipept_A-like"/>
</dbReference>
<dbReference type="InterPro" id="IPR005322">
    <property type="entry name" value="Peptidase_C69"/>
</dbReference>
<dbReference type="NCBIfam" id="NF033678">
    <property type="entry name" value="C69_fam_dipept"/>
    <property type="match status" value="1"/>
</dbReference>
<dbReference type="PANTHER" id="PTHR12994:SF17">
    <property type="entry name" value="LD30995P"/>
    <property type="match status" value="1"/>
</dbReference>
<dbReference type="PANTHER" id="PTHR12994">
    <property type="entry name" value="SECERNIN"/>
    <property type="match status" value="1"/>
</dbReference>
<dbReference type="Pfam" id="PF03577">
    <property type="entry name" value="Peptidase_C69"/>
    <property type="match status" value="1"/>
</dbReference>
<keyword id="KW-0224">Dipeptidase</keyword>
<keyword id="KW-0378">Hydrolase</keyword>
<keyword id="KW-0645">Protease</keyword>
<reference key="1">
    <citation type="journal article" date="2002" name="Proc. Natl. Acad. Sci. U.S.A.">
        <title>Genome sequence and comparative microarray analysis of serotype M18 group A Streptococcus strains associated with acute rheumatic fever outbreaks.</title>
        <authorList>
            <person name="Smoot J.C."/>
            <person name="Barbian K.D."/>
            <person name="Van Gompel J.J."/>
            <person name="Smoot L.M."/>
            <person name="Chaussee M.S."/>
            <person name="Sylva G.L."/>
            <person name="Sturdevant D.E."/>
            <person name="Ricklefs S.M."/>
            <person name="Porcella S.F."/>
            <person name="Parkins L.D."/>
            <person name="Beres S.B."/>
            <person name="Campbell D.S."/>
            <person name="Smith T.M."/>
            <person name="Zhang Q."/>
            <person name="Kapur V."/>
            <person name="Daly J.A."/>
            <person name="Veasy L.G."/>
            <person name="Musser J.M."/>
        </authorList>
    </citation>
    <scope>NUCLEOTIDE SEQUENCE [LARGE SCALE GENOMIC DNA]</scope>
    <source>
        <strain>MGAS8232</strain>
    </source>
</reference>
<feature type="chain" id="PRO_0000220393" description="Probable dipeptidase B">
    <location>
        <begin position="1"/>
        <end position="499"/>
    </location>
</feature>
<feature type="active site" evidence="1">
    <location>
        <position position="26"/>
    </location>
</feature>
<comment type="catalytic activity">
    <reaction>
        <text>an L-aminoacyl-L-amino acid + H2O = 2 an L-alpha-amino acid</text>
        <dbReference type="Rhea" id="RHEA:48940"/>
        <dbReference type="ChEBI" id="CHEBI:15377"/>
        <dbReference type="ChEBI" id="CHEBI:59869"/>
        <dbReference type="ChEBI" id="CHEBI:77460"/>
        <dbReference type="EC" id="3.4.13.19"/>
    </reaction>
</comment>
<comment type="similarity">
    <text evidence="2">Belongs to the peptidase C69 family.</text>
</comment>
<proteinExistence type="inferred from homology"/>
<protein>
    <recommendedName>
        <fullName>Probable dipeptidase B</fullName>
        <ecNumber>3.4.13.19</ecNumber>
    </recommendedName>
</protein>
<organism>
    <name type="scientific">Streptococcus pyogenes serotype M18 (strain MGAS8232)</name>
    <dbReference type="NCBI Taxonomy" id="186103"/>
    <lineage>
        <taxon>Bacteria</taxon>
        <taxon>Bacillati</taxon>
        <taxon>Bacillota</taxon>
        <taxon>Bacilli</taxon>
        <taxon>Lactobacillales</taxon>
        <taxon>Streptococcaceae</taxon>
        <taxon>Streptococcus</taxon>
    </lineage>
</organism>